<comment type="function">
    <text evidence="1">Produces ATP from ADP in the presence of a proton gradient across the membrane. The gamma chain is believed to be important in regulating ATPase activity and the flow of protons through the CF(0) complex.</text>
</comment>
<comment type="subunit">
    <text evidence="1">F-type ATPases have 2 components, CF(1) - the catalytic core - and CF(0) - the membrane proton channel. CF(1) has five subunits: alpha(3), beta(3), gamma(1), delta(1), epsilon(1). CF(0) has three main subunits: a, b and c.</text>
</comment>
<comment type="subcellular location">
    <subcellularLocation>
        <location evidence="1">Cell membrane</location>
        <topology evidence="1">Peripheral membrane protein</topology>
    </subcellularLocation>
</comment>
<comment type="similarity">
    <text evidence="1">Belongs to the ATPase gamma chain family.</text>
</comment>
<sequence>MGAQIRELRRRIKSAGAIKKITKAQELIATSRIAKAQARVVAARPYATEITNVLTALADDAALDHPLLVERPEPKRAGVLIVSSDRGLCGGYNANVLRVAEELYALLREQGKTPVVYVVGRKALNYYSFRNRKVTEAWTGFSERPEYASAQKIADTLVEAFLAGADDEGDDPGLDGILGVDELHIVYTEFKSMLTQAAVAKRIAPMEVEYVGEAAGPTTQYSFEPDATTLFGALLPRYLATRVYAALLEAAASESASRRRAMKAATDNADELIKGLTLEANGARQAQITQEISEIVGGVNALADAAGH</sequence>
<feature type="chain" id="PRO_1000134179" description="ATP synthase gamma chain">
    <location>
        <begin position="1"/>
        <end position="308"/>
    </location>
</feature>
<organism>
    <name type="scientific">Mycobacteroides abscessus (strain ATCC 19977 / DSM 44196 / CCUG 20993 / CIP 104536 / JCM 13569 / NCTC 13031 / TMC 1543 / L948)</name>
    <name type="common">Mycobacterium abscessus</name>
    <dbReference type="NCBI Taxonomy" id="561007"/>
    <lineage>
        <taxon>Bacteria</taxon>
        <taxon>Bacillati</taxon>
        <taxon>Actinomycetota</taxon>
        <taxon>Actinomycetes</taxon>
        <taxon>Mycobacteriales</taxon>
        <taxon>Mycobacteriaceae</taxon>
        <taxon>Mycobacteroides</taxon>
        <taxon>Mycobacteroides abscessus</taxon>
    </lineage>
</organism>
<evidence type="ECO:0000255" key="1">
    <source>
        <dbReference type="HAMAP-Rule" id="MF_00815"/>
    </source>
</evidence>
<keyword id="KW-0066">ATP synthesis</keyword>
<keyword id="KW-1003">Cell membrane</keyword>
<keyword id="KW-0139">CF(1)</keyword>
<keyword id="KW-0375">Hydrogen ion transport</keyword>
<keyword id="KW-0406">Ion transport</keyword>
<keyword id="KW-0472">Membrane</keyword>
<keyword id="KW-1185">Reference proteome</keyword>
<keyword id="KW-0813">Transport</keyword>
<reference key="1">
    <citation type="journal article" date="2009" name="PLoS ONE">
        <title>Non mycobacterial virulence genes in the genome of the emerging pathogen Mycobacterium abscessus.</title>
        <authorList>
            <person name="Ripoll F."/>
            <person name="Pasek S."/>
            <person name="Schenowitz C."/>
            <person name="Dossat C."/>
            <person name="Barbe V."/>
            <person name="Rottman M."/>
            <person name="Macheras E."/>
            <person name="Heym B."/>
            <person name="Herrmann J.L."/>
            <person name="Daffe M."/>
            <person name="Brosch R."/>
            <person name="Risler J.L."/>
            <person name="Gaillard J.L."/>
        </authorList>
    </citation>
    <scope>NUCLEOTIDE SEQUENCE [LARGE SCALE GENOMIC DNA]</scope>
    <source>
        <strain>ATCC 19977 / DSM 44196 / CCUG 20993 / CIP 104536 / JCM 13569 / NCTC 13031 / TMC 1543 / L948</strain>
    </source>
</reference>
<protein>
    <recommendedName>
        <fullName evidence="1">ATP synthase gamma chain</fullName>
    </recommendedName>
    <alternativeName>
        <fullName evidence="1">ATP synthase F1 sector gamma subunit</fullName>
    </alternativeName>
    <alternativeName>
        <fullName evidence="1">F-ATPase gamma subunit</fullName>
    </alternativeName>
</protein>
<proteinExistence type="inferred from homology"/>
<gene>
    <name evidence="1" type="primary">atpG</name>
    <name type="ordered locus">MAB_1452</name>
</gene>
<name>ATPG_MYCA9</name>
<dbReference type="EMBL" id="CU458896">
    <property type="protein sequence ID" value="CAM61538.1"/>
    <property type="molecule type" value="Genomic_DNA"/>
</dbReference>
<dbReference type="RefSeq" id="WP_005074370.1">
    <property type="nucleotide sequence ID" value="NZ_MLCG01000002.1"/>
</dbReference>
<dbReference type="SMR" id="B1MLW1"/>
<dbReference type="GeneID" id="93378397"/>
<dbReference type="KEGG" id="mab:MAB_1452"/>
<dbReference type="Proteomes" id="UP000007137">
    <property type="component" value="Chromosome"/>
</dbReference>
<dbReference type="GO" id="GO:0005886">
    <property type="term" value="C:plasma membrane"/>
    <property type="evidence" value="ECO:0007669"/>
    <property type="project" value="UniProtKB-SubCell"/>
</dbReference>
<dbReference type="GO" id="GO:0045259">
    <property type="term" value="C:proton-transporting ATP synthase complex"/>
    <property type="evidence" value="ECO:0007669"/>
    <property type="project" value="UniProtKB-KW"/>
</dbReference>
<dbReference type="GO" id="GO:0005524">
    <property type="term" value="F:ATP binding"/>
    <property type="evidence" value="ECO:0007669"/>
    <property type="project" value="UniProtKB-UniRule"/>
</dbReference>
<dbReference type="GO" id="GO:0046933">
    <property type="term" value="F:proton-transporting ATP synthase activity, rotational mechanism"/>
    <property type="evidence" value="ECO:0007669"/>
    <property type="project" value="UniProtKB-UniRule"/>
</dbReference>
<dbReference type="GO" id="GO:0042777">
    <property type="term" value="P:proton motive force-driven plasma membrane ATP synthesis"/>
    <property type="evidence" value="ECO:0007669"/>
    <property type="project" value="UniProtKB-UniRule"/>
</dbReference>
<dbReference type="CDD" id="cd12151">
    <property type="entry name" value="F1-ATPase_gamma"/>
    <property type="match status" value="1"/>
</dbReference>
<dbReference type="Gene3D" id="3.40.1380.10">
    <property type="match status" value="1"/>
</dbReference>
<dbReference type="Gene3D" id="1.10.287.80">
    <property type="entry name" value="ATP synthase, gamma subunit, helix hairpin domain"/>
    <property type="match status" value="1"/>
</dbReference>
<dbReference type="HAMAP" id="MF_00815">
    <property type="entry name" value="ATP_synth_gamma_bact"/>
    <property type="match status" value="1"/>
</dbReference>
<dbReference type="InterPro" id="IPR035968">
    <property type="entry name" value="ATP_synth_F1_ATPase_gsu"/>
</dbReference>
<dbReference type="InterPro" id="IPR000131">
    <property type="entry name" value="ATP_synth_F1_gsu"/>
</dbReference>
<dbReference type="NCBIfam" id="TIGR01146">
    <property type="entry name" value="ATPsyn_F1gamma"/>
    <property type="match status" value="1"/>
</dbReference>
<dbReference type="NCBIfam" id="NF004145">
    <property type="entry name" value="PRK05621.1-2"/>
    <property type="match status" value="1"/>
</dbReference>
<dbReference type="PANTHER" id="PTHR11693">
    <property type="entry name" value="ATP SYNTHASE GAMMA CHAIN"/>
    <property type="match status" value="1"/>
</dbReference>
<dbReference type="PANTHER" id="PTHR11693:SF22">
    <property type="entry name" value="ATP SYNTHASE SUBUNIT GAMMA, MITOCHONDRIAL"/>
    <property type="match status" value="1"/>
</dbReference>
<dbReference type="Pfam" id="PF00231">
    <property type="entry name" value="ATP-synt"/>
    <property type="match status" value="1"/>
</dbReference>
<dbReference type="PRINTS" id="PR00126">
    <property type="entry name" value="ATPASEGAMMA"/>
</dbReference>
<dbReference type="SUPFAM" id="SSF52943">
    <property type="entry name" value="ATP synthase (F1-ATPase), gamma subunit"/>
    <property type="match status" value="1"/>
</dbReference>
<accession>B1MLW1</accession>